<name>CH60_BRUAB</name>
<protein>
    <recommendedName>
        <fullName evidence="1">Chaperonin GroEL</fullName>
        <ecNumber evidence="1">5.6.1.7</ecNumber>
    </recommendedName>
    <alternativeName>
        <fullName evidence="1">60 kDa chaperonin</fullName>
    </alternativeName>
    <alternativeName>
        <fullName evidence="1">Chaperonin-60</fullName>
        <shortName evidence="1">Cpn60</shortName>
    </alternativeName>
</protein>
<evidence type="ECO:0000255" key="1">
    <source>
        <dbReference type="HAMAP-Rule" id="MF_00600"/>
    </source>
</evidence>
<organism>
    <name type="scientific">Brucella abortus biovar 1 (strain 9-941)</name>
    <dbReference type="NCBI Taxonomy" id="262698"/>
    <lineage>
        <taxon>Bacteria</taxon>
        <taxon>Pseudomonadati</taxon>
        <taxon>Pseudomonadota</taxon>
        <taxon>Alphaproteobacteria</taxon>
        <taxon>Hyphomicrobiales</taxon>
        <taxon>Brucellaceae</taxon>
        <taxon>Brucella/Ochrobactrum group</taxon>
        <taxon>Brucella</taxon>
    </lineage>
</organism>
<dbReference type="EC" id="5.6.1.7" evidence="1"/>
<dbReference type="EMBL" id="L09273">
    <property type="protein sequence ID" value="AAA22998.1"/>
    <property type="molecule type" value="Genomic_DNA"/>
</dbReference>
<dbReference type="EMBL" id="AE017224">
    <property type="protein sequence ID" value="AAX75634.1"/>
    <property type="molecule type" value="Genomic_DNA"/>
</dbReference>
<dbReference type="PIR" id="I40342">
    <property type="entry name" value="I40342"/>
</dbReference>
<dbReference type="RefSeq" id="WP_002966387.1">
    <property type="nucleotide sequence ID" value="NC_006933.1"/>
</dbReference>
<dbReference type="SMR" id="P0CB35"/>
<dbReference type="EnsemblBacteria" id="AAX75634">
    <property type="protein sequence ID" value="AAX75634"/>
    <property type="gene ID" value="BruAb2_0190"/>
</dbReference>
<dbReference type="GeneID" id="93015849"/>
<dbReference type="KEGG" id="bmb:BruAb2_0190"/>
<dbReference type="HOGENOM" id="CLU_016503_3_0_5"/>
<dbReference type="Proteomes" id="UP000000540">
    <property type="component" value="Chromosome II"/>
</dbReference>
<dbReference type="GO" id="GO:0005737">
    <property type="term" value="C:cytoplasm"/>
    <property type="evidence" value="ECO:0007669"/>
    <property type="project" value="UniProtKB-SubCell"/>
</dbReference>
<dbReference type="GO" id="GO:0005524">
    <property type="term" value="F:ATP binding"/>
    <property type="evidence" value="ECO:0007669"/>
    <property type="project" value="UniProtKB-UniRule"/>
</dbReference>
<dbReference type="GO" id="GO:0140662">
    <property type="term" value="F:ATP-dependent protein folding chaperone"/>
    <property type="evidence" value="ECO:0007669"/>
    <property type="project" value="InterPro"/>
</dbReference>
<dbReference type="GO" id="GO:0016853">
    <property type="term" value="F:isomerase activity"/>
    <property type="evidence" value="ECO:0007669"/>
    <property type="project" value="UniProtKB-KW"/>
</dbReference>
<dbReference type="GO" id="GO:0051082">
    <property type="term" value="F:unfolded protein binding"/>
    <property type="evidence" value="ECO:0007669"/>
    <property type="project" value="UniProtKB-UniRule"/>
</dbReference>
<dbReference type="GO" id="GO:0042026">
    <property type="term" value="P:protein refolding"/>
    <property type="evidence" value="ECO:0007669"/>
    <property type="project" value="UniProtKB-UniRule"/>
</dbReference>
<dbReference type="CDD" id="cd03344">
    <property type="entry name" value="GroEL"/>
    <property type="match status" value="1"/>
</dbReference>
<dbReference type="FunFam" id="1.10.560.10:FF:000001">
    <property type="entry name" value="60 kDa chaperonin"/>
    <property type="match status" value="1"/>
</dbReference>
<dbReference type="FunFam" id="3.50.7.10:FF:000001">
    <property type="entry name" value="60 kDa chaperonin"/>
    <property type="match status" value="1"/>
</dbReference>
<dbReference type="Gene3D" id="3.50.7.10">
    <property type="entry name" value="GroEL"/>
    <property type="match status" value="1"/>
</dbReference>
<dbReference type="Gene3D" id="1.10.560.10">
    <property type="entry name" value="GroEL-like equatorial domain"/>
    <property type="match status" value="1"/>
</dbReference>
<dbReference type="Gene3D" id="3.30.260.10">
    <property type="entry name" value="TCP-1-like chaperonin intermediate domain"/>
    <property type="match status" value="1"/>
</dbReference>
<dbReference type="HAMAP" id="MF_00600">
    <property type="entry name" value="CH60"/>
    <property type="match status" value="1"/>
</dbReference>
<dbReference type="InterPro" id="IPR018370">
    <property type="entry name" value="Chaperonin_Cpn60_CS"/>
</dbReference>
<dbReference type="InterPro" id="IPR001844">
    <property type="entry name" value="Cpn60/GroEL"/>
</dbReference>
<dbReference type="InterPro" id="IPR002423">
    <property type="entry name" value="Cpn60/GroEL/TCP-1"/>
</dbReference>
<dbReference type="InterPro" id="IPR027409">
    <property type="entry name" value="GroEL-like_apical_dom_sf"/>
</dbReference>
<dbReference type="InterPro" id="IPR027413">
    <property type="entry name" value="GROEL-like_equatorial_sf"/>
</dbReference>
<dbReference type="InterPro" id="IPR027410">
    <property type="entry name" value="TCP-1-like_intermed_sf"/>
</dbReference>
<dbReference type="NCBIfam" id="TIGR02348">
    <property type="entry name" value="GroEL"/>
    <property type="match status" value="1"/>
</dbReference>
<dbReference type="NCBIfam" id="NF000592">
    <property type="entry name" value="PRK00013.1"/>
    <property type="match status" value="1"/>
</dbReference>
<dbReference type="NCBIfam" id="NF009487">
    <property type="entry name" value="PRK12849.1"/>
    <property type="match status" value="1"/>
</dbReference>
<dbReference type="NCBIfam" id="NF009488">
    <property type="entry name" value="PRK12850.1"/>
    <property type="match status" value="1"/>
</dbReference>
<dbReference type="NCBIfam" id="NF009489">
    <property type="entry name" value="PRK12851.1"/>
    <property type="match status" value="1"/>
</dbReference>
<dbReference type="PANTHER" id="PTHR45633">
    <property type="entry name" value="60 KDA HEAT SHOCK PROTEIN, MITOCHONDRIAL"/>
    <property type="match status" value="1"/>
</dbReference>
<dbReference type="Pfam" id="PF00118">
    <property type="entry name" value="Cpn60_TCP1"/>
    <property type="match status" value="1"/>
</dbReference>
<dbReference type="PRINTS" id="PR00298">
    <property type="entry name" value="CHAPERONIN60"/>
</dbReference>
<dbReference type="SUPFAM" id="SSF52029">
    <property type="entry name" value="GroEL apical domain-like"/>
    <property type="match status" value="1"/>
</dbReference>
<dbReference type="SUPFAM" id="SSF48592">
    <property type="entry name" value="GroEL equatorial domain-like"/>
    <property type="match status" value="1"/>
</dbReference>
<dbReference type="SUPFAM" id="SSF54849">
    <property type="entry name" value="GroEL-intermediate domain like"/>
    <property type="match status" value="1"/>
</dbReference>
<dbReference type="PROSITE" id="PS00296">
    <property type="entry name" value="CHAPERONINS_CPN60"/>
    <property type="match status" value="1"/>
</dbReference>
<proteinExistence type="inferred from homology"/>
<comment type="function">
    <text evidence="1">Together with its co-chaperonin GroES, plays an essential role in assisting protein folding. The GroEL-GroES system forms a nano-cage that allows encapsulation of the non-native substrate proteins and provides a physical environment optimized to promote and accelerate protein folding.</text>
</comment>
<comment type="catalytic activity">
    <reaction evidence="1">
        <text>ATP + H2O + a folded polypeptide = ADP + phosphate + an unfolded polypeptide.</text>
        <dbReference type="EC" id="5.6.1.7"/>
    </reaction>
</comment>
<comment type="subunit">
    <text evidence="1">Forms a cylinder of 14 subunits composed of two heptameric rings stacked back-to-back. Interacts with the co-chaperonin GroES.</text>
</comment>
<comment type="subcellular location">
    <subcellularLocation>
        <location evidence="1">Cytoplasm</location>
    </subcellularLocation>
</comment>
<comment type="similarity">
    <text evidence="1">Belongs to the chaperonin (HSP60) family.</text>
</comment>
<accession>P0CB35</accession>
<accession>P25967</accession>
<accession>Q579Q0</accession>
<keyword id="KW-0067">ATP-binding</keyword>
<keyword id="KW-0143">Chaperone</keyword>
<keyword id="KW-0963">Cytoplasm</keyword>
<keyword id="KW-0413">Isomerase</keyword>
<keyword id="KW-0547">Nucleotide-binding</keyword>
<keyword id="KW-0346">Stress response</keyword>
<sequence length="546" mass="57515">MAAKDVKFGRTAREKMLRGVDILADAVKVTLGPKGRNVVIEKSFGAPRITKDGVSVAKEVELEDKFENMGAQMLREVASKTNDTAGDGTTTATVLGQAIVQEGAKAVAAGMNPMDLKRGIDLAVNEVVAELLKKAKKINTSEEVAQVGTISANGEAEIGKMIAEAMQKVGNEGVITVEEAKTAETELEVVEGMQFDRGYLSPYFVTNPEKMVADLEDAYILLHEKKLSNLQALLPVLEAVVQTSKPLLIIAEDVEGEALATLVVNKLRGGLKIAAVKAPGFGDRRKAMLEDIAILTGGQVISEDLGIKLESVTLDMLGRAKKVSISKENTTIVDGAGQKAEIDARVGQIKQQIEETTSDYDREKLQERLAKLAGGVAVIRVGGATEVEVKEKKDRVDDALNATRAAVEEGIVAGGGTALLRASTKITAKGVNADQEAGINIVRRAIQAPARQITTNAGEEASVIVGKILENTSETFGYNTANGEYGDLISLGIVDPVKVVRTALQNAASVAGLLITTEAMIAELPKKDAAPAGMPGGMGGMGGMDF</sequence>
<gene>
    <name evidence="1" type="primary">groEL</name>
    <name evidence="1" type="synonym">groL</name>
    <name type="synonym">mopA</name>
    <name type="ordered locus">BruAb2_0190</name>
</gene>
<reference key="1">
    <citation type="journal article" date="1992" name="Microb. Pathog.">
        <title>Molecular cloning and nucleotide sequence analysis of the gene encoding the immunoreactive Brucella abortus Hsp60 protein, BA60K.</title>
        <authorList>
            <person name="Roop R.M. II"/>
            <person name="Price M.L."/>
            <person name="Dunn B.E."/>
            <person name="Boyle S.M."/>
            <person name="Srirananganathan N."/>
            <person name="Schurig G.G."/>
        </authorList>
    </citation>
    <scope>NUCLEOTIDE SEQUENCE [GENOMIC DNA]</scope>
</reference>
<reference key="2">
    <citation type="journal article" date="2005" name="J. Bacteriol.">
        <title>Completion of the genome sequence of Brucella abortus and comparison to the highly similar genomes of Brucella melitensis and Brucella suis.</title>
        <authorList>
            <person name="Halling S.M."/>
            <person name="Peterson-Burch B.D."/>
            <person name="Bricker B.J."/>
            <person name="Zuerner R.L."/>
            <person name="Qing Z."/>
            <person name="Li L.-L."/>
            <person name="Kapur V."/>
            <person name="Alt D.P."/>
            <person name="Olsen S.C."/>
        </authorList>
    </citation>
    <scope>NUCLEOTIDE SEQUENCE [LARGE SCALE GENOMIC DNA]</scope>
    <source>
        <strain>9-941</strain>
    </source>
</reference>
<feature type="chain" id="PRO_0000063302" description="Chaperonin GroEL">
    <location>
        <begin position="1"/>
        <end position="546"/>
    </location>
</feature>
<feature type="binding site" evidence="1">
    <location>
        <begin position="30"/>
        <end position="33"/>
    </location>
    <ligand>
        <name>ATP</name>
        <dbReference type="ChEBI" id="CHEBI:30616"/>
    </ligand>
</feature>
<feature type="binding site" evidence="1">
    <location>
        <position position="51"/>
    </location>
    <ligand>
        <name>ATP</name>
        <dbReference type="ChEBI" id="CHEBI:30616"/>
    </ligand>
</feature>
<feature type="binding site" evidence="1">
    <location>
        <begin position="87"/>
        <end position="91"/>
    </location>
    <ligand>
        <name>ATP</name>
        <dbReference type="ChEBI" id="CHEBI:30616"/>
    </ligand>
</feature>
<feature type="binding site" evidence="1">
    <location>
        <position position="415"/>
    </location>
    <ligand>
        <name>ATP</name>
        <dbReference type="ChEBI" id="CHEBI:30616"/>
    </ligand>
</feature>
<feature type="binding site" evidence="1">
    <location>
        <position position="495"/>
    </location>
    <ligand>
        <name>ATP</name>
        <dbReference type="ChEBI" id="CHEBI:30616"/>
    </ligand>
</feature>